<name>CREN7_PYRCJ</name>
<reference key="1">
    <citation type="submission" date="2007-02" db="EMBL/GenBank/DDBJ databases">
        <title>Complete sequence of Pyrobaculum calidifontis JCM 11548.</title>
        <authorList>
            <consortium name="US DOE Joint Genome Institute"/>
            <person name="Copeland A."/>
            <person name="Lucas S."/>
            <person name="Lapidus A."/>
            <person name="Barry K."/>
            <person name="Glavina del Rio T."/>
            <person name="Dalin E."/>
            <person name="Tice H."/>
            <person name="Pitluck S."/>
            <person name="Chain P."/>
            <person name="Malfatti S."/>
            <person name="Shin M."/>
            <person name="Vergez L."/>
            <person name="Schmutz J."/>
            <person name="Larimer F."/>
            <person name="Land M."/>
            <person name="Hauser L."/>
            <person name="Kyrpides N."/>
            <person name="Mikhailova N."/>
            <person name="Cozen A.E."/>
            <person name="Fitz-Gibbon S.T."/>
            <person name="House C.H."/>
            <person name="Saltikov C."/>
            <person name="Lowe T.M."/>
            <person name="Richardson P."/>
        </authorList>
    </citation>
    <scope>NUCLEOTIDE SEQUENCE [LARGE SCALE GENOMIC DNA]</scope>
    <source>
        <strain>DSM 21063 / JCM 11548 / VA1</strain>
    </source>
</reference>
<proteinExistence type="inferred from homology"/>
<gene>
    <name evidence="1" type="primary">creN7</name>
    <name type="ordered locus">Pcal_0878</name>
</gene>
<dbReference type="EMBL" id="CP000561">
    <property type="protein sequence ID" value="ABO08304.1"/>
    <property type="molecule type" value="Genomic_DNA"/>
</dbReference>
<dbReference type="SMR" id="A3MUI7"/>
<dbReference type="STRING" id="410359.Pcal_0878"/>
<dbReference type="KEGG" id="pcl:Pcal_0878"/>
<dbReference type="eggNOG" id="arCOG04114">
    <property type="taxonomic scope" value="Archaea"/>
</dbReference>
<dbReference type="HOGENOM" id="CLU_192664_0_0_2"/>
<dbReference type="Proteomes" id="UP000001431">
    <property type="component" value="Chromosome"/>
</dbReference>
<dbReference type="GO" id="GO:0005694">
    <property type="term" value="C:chromosome"/>
    <property type="evidence" value="ECO:0007669"/>
    <property type="project" value="UniProtKB-SubCell"/>
</dbReference>
<dbReference type="GO" id="GO:0005737">
    <property type="term" value="C:cytoplasm"/>
    <property type="evidence" value="ECO:0007669"/>
    <property type="project" value="UniProtKB-SubCell"/>
</dbReference>
<dbReference type="GO" id="GO:0003690">
    <property type="term" value="F:double-stranded DNA binding"/>
    <property type="evidence" value="ECO:0007669"/>
    <property type="project" value="UniProtKB-UniRule"/>
</dbReference>
<dbReference type="Gene3D" id="2.30.30.610">
    <property type="entry name" value="Chromatin protein Cren7"/>
    <property type="match status" value="1"/>
</dbReference>
<dbReference type="HAMAP" id="MF_01387">
    <property type="entry name" value="Chromatin_Cren7"/>
    <property type="match status" value="1"/>
</dbReference>
<dbReference type="InterPro" id="IPR038647">
    <property type="entry name" value="Cren7_sf"/>
</dbReference>
<dbReference type="InterPro" id="IPR020906">
    <property type="entry name" value="dsDNA-bd_Cren7"/>
</dbReference>
<dbReference type="Pfam" id="PF11520">
    <property type="entry name" value="Cren7"/>
    <property type="match status" value="1"/>
</dbReference>
<accession>A3MUI7</accession>
<sequence>MDQDVAEEILNKEYEVVYEGKRFLLKPAKAWVLQPPGKPGVIVALFKLPNGKTVRKVIARLPP</sequence>
<feature type="chain" id="PRO_0000345173" description="Chromatin protein Cren7">
    <location>
        <begin position="1"/>
        <end position="63"/>
    </location>
</feature>
<organism>
    <name type="scientific">Pyrobaculum calidifontis (strain DSM 21063 / JCM 11548 / VA1)</name>
    <dbReference type="NCBI Taxonomy" id="410359"/>
    <lineage>
        <taxon>Archaea</taxon>
        <taxon>Thermoproteota</taxon>
        <taxon>Thermoprotei</taxon>
        <taxon>Thermoproteales</taxon>
        <taxon>Thermoproteaceae</taxon>
        <taxon>Pyrobaculum</taxon>
    </lineage>
</organism>
<comment type="function">
    <text evidence="1">A chromatin protein, binds double-stranded DNA without sequence specificity. Constrains negative DNA supercoils.</text>
</comment>
<comment type="subunit">
    <text evidence="1">Monomer.</text>
</comment>
<comment type="subcellular location">
    <subcellularLocation>
        <location evidence="1">Chromosome</location>
    </subcellularLocation>
    <subcellularLocation>
        <location evidence="1">Cytoplasm</location>
    </subcellularLocation>
</comment>
<comment type="PTM">
    <text evidence="1">Methylated at multiple sites, to varying extents.</text>
</comment>
<comment type="similarity">
    <text evidence="1">Belongs to the Cren7 family.</text>
</comment>
<protein>
    <recommendedName>
        <fullName evidence="1">Chromatin protein Cren7</fullName>
    </recommendedName>
</protein>
<evidence type="ECO:0000255" key="1">
    <source>
        <dbReference type="HAMAP-Rule" id="MF_01387"/>
    </source>
</evidence>
<keyword id="KW-0158">Chromosome</keyword>
<keyword id="KW-0963">Cytoplasm</keyword>
<keyword id="KW-0238">DNA-binding</keyword>
<keyword id="KW-0488">Methylation</keyword>